<organism evidence="3">
    <name type="scientific">Melicytus latifolius</name>
    <name type="common">Norfolk Island mahoe</name>
    <name type="synonym">Hymenanthera latifolia</name>
    <dbReference type="NCBI Taxonomy" id="212268"/>
    <lineage>
        <taxon>Eukaryota</taxon>
        <taxon>Viridiplantae</taxon>
        <taxon>Streptophyta</taxon>
        <taxon>Embryophyta</taxon>
        <taxon>Tracheophyta</taxon>
        <taxon>Spermatophyta</taxon>
        <taxon>Magnoliopsida</taxon>
        <taxon>eudicotyledons</taxon>
        <taxon>Gunneridae</taxon>
        <taxon>Pentapetalae</taxon>
        <taxon>rosids</taxon>
        <taxon>fabids</taxon>
        <taxon>Malpighiales</taxon>
        <taxon>Violaceae</taxon>
        <taxon>Melicytus</taxon>
    </lineage>
</organism>
<keyword id="KW-0204">Cytolysis</keyword>
<keyword id="KW-0903">Direct protein sequencing</keyword>
<keyword id="KW-1015">Disulfide bond</keyword>
<keyword id="KW-0960">Knottin</keyword>
<keyword id="KW-0611">Plant defense</keyword>
<reference evidence="4" key="1">
    <citation type="journal article" date="2015" name="ACS Chem. Biol.">
        <title>Lysine-rich cyclotides: a new subclass of circular knotted proteins from Violaceae.</title>
        <authorList>
            <person name="Ravipati A.S."/>
            <person name="Henriques S.T."/>
            <person name="Poth A.G."/>
            <person name="Kaas Q."/>
            <person name="Wang C.K."/>
            <person name="Colgrave M.L."/>
            <person name="Craik D.J."/>
        </authorList>
    </citation>
    <scope>PROTEIN SEQUENCE</scope>
    <scope>FUNCTION</scope>
    <scope>MASS SPECTROMETRY</scope>
    <scope>IDENTIFICATION BY MASS SPECTROMETRY</scope>
    <scope>PRESENCE OF DISULFIDE BONDS</scope>
</reference>
<accession>C0HK31</accession>
<proteinExistence type="evidence at protein level"/>
<name>CYML4_MELLF</name>
<protein>
    <recommendedName>
        <fullName evidence="3">Cyclotide mela-4</fullName>
    </recommendedName>
</protein>
<comment type="function">
    <text evidence="1 2">Probably participates in a plant defense mechanism (Potential). Binds to and induces leakage in phospholipd membranes, particularly ones containing 1-palmitoyl-2-oleophosphatidylethanolamine (POPE) (PubMed:26322745). In vitro, displays cytotoxicity against cultured cells (PubMed:26322745). Not active against Gram-negative bacterium E.coli ATCC 25922 or Gram-positive bacterium S.aureus ATCC 25923 up to a concentration of 64 uM (PubMed:26322745).</text>
</comment>
<comment type="domain">
    <text evidence="4">The presence of a 'disulfide through disulfide knot' structurally defines this protein as a knottin.</text>
</comment>
<comment type="PTM">
    <text evidence="1">This is a cyclic peptide.</text>
</comment>
<comment type="PTM">
    <text evidence="2">Contains 3 disulfide bonds.</text>
</comment>
<comment type="mass spectrometry"/>
<comment type="similarity">
    <text evidence="3">Belongs to the cyclotide family. Moebuis subfamily.</text>
</comment>
<comment type="caution">
    <text evidence="1">This peptide is cyclic. The start position was chosen by similarity to Oak1 (kalata B1) for which the DNA sequence is known.</text>
</comment>
<feature type="peptide" id="PRO_0000437510" description="Cyclotide mela-4" evidence="1 2">
    <location>
        <begin position="1"/>
        <end position="29"/>
    </location>
</feature>
<feature type="disulfide bond" evidence="1">
    <location>
        <begin position="5"/>
        <end position="19"/>
    </location>
</feature>
<feature type="disulfide bond" evidence="1">
    <location>
        <begin position="9"/>
        <end position="21"/>
    </location>
</feature>
<feature type="disulfide bond" evidence="1">
    <location>
        <begin position="14"/>
        <end position="26"/>
    </location>
</feature>
<feature type="cross-link" description="Cyclopeptide (Gly-Asn)" evidence="5">
    <location>
        <begin position="1"/>
        <end position="29"/>
    </location>
</feature>
<sequence>GKPICGETCFKGKCYTPGCTCSYPICKKN</sequence>
<dbReference type="SMR" id="C0HK31"/>
<dbReference type="GO" id="GO:0006952">
    <property type="term" value="P:defense response"/>
    <property type="evidence" value="ECO:0007669"/>
    <property type="project" value="UniProtKB-KW"/>
</dbReference>
<dbReference type="GO" id="GO:0031640">
    <property type="term" value="P:killing of cells of another organism"/>
    <property type="evidence" value="ECO:0007669"/>
    <property type="project" value="UniProtKB-KW"/>
</dbReference>
<dbReference type="InterPro" id="IPR005535">
    <property type="entry name" value="Cyclotide"/>
</dbReference>
<dbReference type="InterPro" id="IPR036146">
    <property type="entry name" value="Cyclotide_sf"/>
</dbReference>
<dbReference type="Pfam" id="PF03784">
    <property type="entry name" value="Cyclotide"/>
    <property type="match status" value="1"/>
</dbReference>
<dbReference type="SUPFAM" id="SSF57038">
    <property type="entry name" value="Cyclotides"/>
    <property type="match status" value="1"/>
</dbReference>
<dbReference type="PROSITE" id="PS51052">
    <property type="entry name" value="CYCLOTIDE"/>
    <property type="match status" value="1"/>
</dbReference>
<evidence type="ECO:0000255" key="1">
    <source>
        <dbReference type="PROSITE-ProRule" id="PRU00395"/>
    </source>
</evidence>
<evidence type="ECO:0000269" key="2">
    <source>
    </source>
</evidence>
<evidence type="ECO:0000303" key="3">
    <source>
    </source>
</evidence>
<evidence type="ECO:0000305" key="4"/>
<evidence type="ECO:0000305" key="5">
    <source>
    </source>
</evidence>